<dbReference type="EMBL" id="CP000094">
    <property type="protein sequence ID" value="ABA75893.1"/>
    <property type="molecule type" value="Genomic_DNA"/>
</dbReference>
<dbReference type="RefSeq" id="WP_003175607.1">
    <property type="nucleotide sequence ID" value="NC_007492.2"/>
</dbReference>
<dbReference type="SMR" id="Q3K8L1"/>
<dbReference type="GeneID" id="98112601"/>
<dbReference type="KEGG" id="pfo:Pfl01_4156"/>
<dbReference type="eggNOG" id="COG0236">
    <property type="taxonomic scope" value="Bacteria"/>
</dbReference>
<dbReference type="HOGENOM" id="CLU_108696_5_1_6"/>
<dbReference type="UniPathway" id="UPA00094"/>
<dbReference type="Proteomes" id="UP000002704">
    <property type="component" value="Chromosome"/>
</dbReference>
<dbReference type="GO" id="GO:0005829">
    <property type="term" value="C:cytosol"/>
    <property type="evidence" value="ECO:0007669"/>
    <property type="project" value="TreeGrafter"/>
</dbReference>
<dbReference type="GO" id="GO:0016020">
    <property type="term" value="C:membrane"/>
    <property type="evidence" value="ECO:0007669"/>
    <property type="project" value="GOC"/>
</dbReference>
<dbReference type="GO" id="GO:0000035">
    <property type="term" value="F:acyl binding"/>
    <property type="evidence" value="ECO:0007669"/>
    <property type="project" value="TreeGrafter"/>
</dbReference>
<dbReference type="GO" id="GO:0000036">
    <property type="term" value="F:acyl carrier activity"/>
    <property type="evidence" value="ECO:0007669"/>
    <property type="project" value="UniProtKB-UniRule"/>
</dbReference>
<dbReference type="GO" id="GO:0031177">
    <property type="term" value="F:phosphopantetheine binding"/>
    <property type="evidence" value="ECO:0007669"/>
    <property type="project" value="InterPro"/>
</dbReference>
<dbReference type="GO" id="GO:0009245">
    <property type="term" value="P:lipid A biosynthetic process"/>
    <property type="evidence" value="ECO:0007669"/>
    <property type="project" value="TreeGrafter"/>
</dbReference>
<dbReference type="FunFam" id="1.10.1200.10:FF:000001">
    <property type="entry name" value="Acyl carrier protein"/>
    <property type="match status" value="1"/>
</dbReference>
<dbReference type="Gene3D" id="1.10.1200.10">
    <property type="entry name" value="ACP-like"/>
    <property type="match status" value="1"/>
</dbReference>
<dbReference type="HAMAP" id="MF_01217">
    <property type="entry name" value="Acyl_carrier"/>
    <property type="match status" value="1"/>
</dbReference>
<dbReference type="InterPro" id="IPR003231">
    <property type="entry name" value="ACP"/>
</dbReference>
<dbReference type="InterPro" id="IPR036736">
    <property type="entry name" value="ACP-like_sf"/>
</dbReference>
<dbReference type="InterPro" id="IPR020806">
    <property type="entry name" value="PKS_PP-bd"/>
</dbReference>
<dbReference type="InterPro" id="IPR009081">
    <property type="entry name" value="PP-bd_ACP"/>
</dbReference>
<dbReference type="InterPro" id="IPR006162">
    <property type="entry name" value="Ppantetheine_attach_site"/>
</dbReference>
<dbReference type="NCBIfam" id="TIGR00517">
    <property type="entry name" value="acyl_carrier"/>
    <property type="match status" value="1"/>
</dbReference>
<dbReference type="NCBIfam" id="NF002148">
    <property type="entry name" value="PRK00982.1-2"/>
    <property type="match status" value="1"/>
</dbReference>
<dbReference type="NCBIfam" id="NF002149">
    <property type="entry name" value="PRK00982.1-3"/>
    <property type="match status" value="1"/>
</dbReference>
<dbReference type="NCBIfam" id="NF002150">
    <property type="entry name" value="PRK00982.1-4"/>
    <property type="match status" value="1"/>
</dbReference>
<dbReference type="NCBIfam" id="NF002151">
    <property type="entry name" value="PRK00982.1-5"/>
    <property type="match status" value="1"/>
</dbReference>
<dbReference type="PANTHER" id="PTHR20863">
    <property type="entry name" value="ACYL CARRIER PROTEIN"/>
    <property type="match status" value="1"/>
</dbReference>
<dbReference type="PANTHER" id="PTHR20863:SF76">
    <property type="entry name" value="CARRIER DOMAIN-CONTAINING PROTEIN"/>
    <property type="match status" value="1"/>
</dbReference>
<dbReference type="Pfam" id="PF00550">
    <property type="entry name" value="PP-binding"/>
    <property type="match status" value="1"/>
</dbReference>
<dbReference type="SMART" id="SM00823">
    <property type="entry name" value="PKS_PP"/>
    <property type="match status" value="1"/>
</dbReference>
<dbReference type="SUPFAM" id="SSF47336">
    <property type="entry name" value="ACP-like"/>
    <property type="match status" value="1"/>
</dbReference>
<dbReference type="PROSITE" id="PS50075">
    <property type="entry name" value="CARRIER"/>
    <property type="match status" value="1"/>
</dbReference>
<dbReference type="PROSITE" id="PS00012">
    <property type="entry name" value="PHOSPHOPANTETHEINE"/>
    <property type="match status" value="1"/>
</dbReference>
<keyword id="KW-0963">Cytoplasm</keyword>
<keyword id="KW-0275">Fatty acid biosynthesis</keyword>
<keyword id="KW-0276">Fatty acid metabolism</keyword>
<keyword id="KW-0444">Lipid biosynthesis</keyword>
<keyword id="KW-0443">Lipid metabolism</keyword>
<keyword id="KW-0596">Phosphopantetheine</keyword>
<keyword id="KW-0597">Phosphoprotein</keyword>
<feature type="chain" id="PRO_1000066663" description="Acyl carrier protein">
    <location>
        <begin position="1"/>
        <end position="78"/>
    </location>
</feature>
<feature type="domain" description="Carrier" evidence="2">
    <location>
        <begin position="2"/>
        <end position="77"/>
    </location>
</feature>
<feature type="modified residue" description="O-(pantetheine 4'-phosphoryl)serine" evidence="2">
    <location>
        <position position="37"/>
    </location>
</feature>
<comment type="function">
    <text evidence="1">Carrier of the growing fatty acid chain in fatty acid biosynthesis.</text>
</comment>
<comment type="pathway">
    <text evidence="1">Lipid metabolism; fatty acid biosynthesis.</text>
</comment>
<comment type="subcellular location">
    <subcellularLocation>
        <location evidence="1">Cytoplasm</location>
    </subcellularLocation>
</comment>
<comment type="PTM">
    <text evidence="1">4'-phosphopantetheine is transferred from CoA to a specific serine of apo-ACP by AcpS. This modification is essential for activity because fatty acids are bound in thioester linkage to the sulfhydryl of the prosthetic group.</text>
</comment>
<comment type="similarity">
    <text evidence="1">Belongs to the acyl carrier protein (ACP) family.</text>
</comment>
<organism>
    <name type="scientific">Pseudomonas fluorescens (strain Pf0-1)</name>
    <dbReference type="NCBI Taxonomy" id="205922"/>
    <lineage>
        <taxon>Bacteria</taxon>
        <taxon>Pseudomonadati</taxon>
        <taxon>Pseudomonadota</taxon>
        <taxon>Gammaproteobacteria</taxon>
        <taxon>Pseudomonadales</taxon>
        <taxon>Pseudomonadaceae</taxon>
        <taxon>Pseudomonas</taxon>
    </lineage>
</organism>
<accession>Q3K8L1</accession>
<protein>
    <recommendedName>
        <fullName evidence="1">Acyl carrier protein</fullName>
        <shortName evidence="1">ACP</shortName>
    </recommendedName>
</protein>
<sequence>MSTIEERVKKIVAEQLGVKEEEVVNTASFVEDLGADSLDTVELVMALEEEFETEIPDEEAEKITTVQAAIDYVTSHQA</sequence>
<proteinExistence type="inferred from homology"/>
<gene>
    <name evidence="1" type="primary">acpP</name>
    <name type="ordered locus">Pfl01_4156</name>
</gene>
<name>ACP_PSEPF</name>
<reference key="1">
    <citation type="journal article" date="2009" name="Genome Biol.">
        <title>Genomic and genetic analyses of diversity and plant interactions of Pseudomonas fluorescens.</title>
        <authorList>
            <person name="Silby M.W."/>
            <person name="Cerdeno-Tarraga A.M."/>
            <person name="Vernikos G.S."/>
            <person name="Giddens S.R."/>
            <person name="Jackson R.W."/>
            <person name="Preston G.M."/>
            <person name="Zhang X.-X."/>
            <person name="Moon C.D."/>
            <person name="Gehrig S.M."/>
            <person name="Godfrey S.A.C."/>
            <person name="Knight C.G."/>
            <person name="Malone J.G."/>
            <person name="Robinson Z."/>
            <person name="Spiers A.J."/>
            <person name="Harris S."/>
            <person name="Challis G.L."/>
            <person name="Yaxley A.M."/>
            <person name="Harris D."/>
            <person name="Seeger K."/>
            <person name="Murphy L."/>
            <person name="Rutter S."/>
            <person name="Squares R."/>
            <person name="Quail M.A."/>
            <person name="Saunders E."/>
            <person name="Mavromatis K."/>
            <person name="Brettin T.S."/>
            <person name="Bentley S.D."/>
            <person name="Hothersall J."/>
            <person name="Stephens E."/>
            <person name="Thomas C.M."/>
            <person name="Parkhill J."/>
            <person name="Levy S.B."/>
            <person name="Rainey P.B."/>
            <person name="Thomson N.R."/>
        </authorList>
    </citation>
    <scope>NUCLEOTIDE SEQUENCE [LARGE SCALE GENOMIC DNA]</scope>
    <source>
        <strain>Pf0-1</strain>
    </source>
</reference>
<evidence type="ECO:0000255" key="1">
    <source>
        <dbReference type="HAMAP-Rule" id="MF_01217"/>
    </source>
</evidence>
<evidence type="ECO:0000255" key="2">
    <source>
        <dbReference type="PROSITE-ProRule" id="PRU00258"/>
    </source>
</evidence>